<gene>
    <name evidence="1" type="primary">rbfA</name>
    <name type="ordered locus">RHECIAT_CH0000152</name>
</gene>
<protein>
    <recommendedName>
        <fullName evidence="1">Ribosome-binding factor A</fullName>
    </recommendedName>
</protein>
<keyword id="KW-0963">Cytoplasm</keyword>
<keyword id="KW-0690">Ribosome biogenesis</keyword>
<dbReference type="EMBL" id="CP001074">
    <property type="protein sequence ID" value="ACE89148.1"/>
    <property type="molecule type" value="Genomic_DNA"/>
</dbReference>
<dbReference type="SMR" id="B3PXE2"/>
<dbReference type="KEGG" id="rec:RHECIAT_CH0000152"/>
<dbReference type="eggNOG" id="COG0858">
    <property type="taxonomic scope" value="Bacteria"/>
</dbReference>
<dbReference type="HOGENOM" id="CLU_089475_1_0_5"/>
<dbReference type="Proteomes" id="UP000008817">
    <property type="component" value="Chromosome"/>
</dbReference>
<dbReference type="GO" id="GO:0005829">
    <property type="term" value="C:cytosol"/>
    <property type="evidence" value="ECO:0007669"/>
    <property type="project" value="TreeGrafter"/>
</dbReference>
<dbReference type="GO" id="GO:0043024">
    <property type="term" value="F:ribosomal small subunit binding"/>
    <property type="evidence" value="ECO:0007669"/>
    <property type="project" value="TreeGrafter"/>
</dbReference>
<dbReference type="GO" id="GO:0030490">
    <property type="term" value="P:maturation of SSU-rRNA"/>
    <property type="evidence" value="ECO:0007669"/>
    <property type="project" value="UniProtKB-UniRule"/>
</dbReference>
<dbReference type="Gene3D" id="3.30.300.20">
    <property type="match status" value="1"/>
</dbReference>
<dbReference type="HAMAP" id="MF_00003">
    <property type="entry name" value="RbfA"/>
    <property type="match status" value="1"/>
</dbReference>
<dbReference type="InterPro" id="IPR015946">
    <property type="entry name" value="KH_dom-like_a/b"/>
</dbReference>
<dbReference type="InterPro" id="IPR000238">
    <property type="entry name" value="RbfA"/>
</dbReference>
<dbReference type="InterPro" id="IPR023799">
    <property type="entry name" value="RbfA_dom_sf"/>
</dbReference>
<dbReference type="InterPro" id="IPR020053">
    <property type="entry name" value="Ribosome-bd_factorA_CS"/>
</dbReference>
<dbReference type="NCBIfam" id="NF001802">
    <property type="entry name" value="PRK00521.2-5"/>
    <property type="match status" value="1"/>
</dbReference>
<dbReference type="NCBIfam" id="TIGR00082">
    <property type="entry name" value="rbfA"/>
    <property type="match status" value="1"/>
</dbReference>
<dbReference type="PANTHER" id="PTHR33515">
    <property type="entry name" value="RIBOSOME-BINDING FACTOR A, CHLOROPLASTIC-RELATED"/>
    <property type="match status" value="1"/>
</dbReference>
<dbReference type="PANTHER" id="PTHR33515:SF1">
    <property type="entry name" value="RIBOSOME-BINDING FACTOR A, CHLOROPLASTIC-RELATED"/>
    <property type="match status" value="1"/>
</dbReference>
<dbReference type="Pfam" id="PF02033">
    <property type="entry name" value="RBFA"/>
    <property type="match status" value="1"/>
</dbReference>
<dbReference type="SUPFAM" id="SSF89919">
    <property type="entry name" value="Ribosome-binding factor A, RbfA"/>
    <property type="match status" value="1"/>
</dbReference>
<dbReference type="PROSITE" id="PS01319">
    <property type="entry name" value="RBFA"/>
    <property type="match status" value="1"/>
</dbReference>
<organism>
    <name type="scientific">Rhizobium etli (strain CIAT 652)</name>
    <dbReference type="NCBI Taxonomy" id="491916"/>
    <lineage>
        <taxon>Bacteria</taxon>
        <taxon>Pseudomonadati</taxon>
        <taxon>Pseudomonadota</taxon>
        <taxon>Alphaproteobacteria</taxon>
        <taxon>Hyphomicrobiales</taxon>
        <taxon>Rhizobiaceae</taxon>
        <taxon>Rhizobium/Agrobacterium group</taxon>
        <taxon>Rhizobium</taxon>
    </lineage>
</organism>
<name>RBFA_RHIE6</name>
<feature type="chain" id="PRO_1000088920" description="Ribosome-binding factor A">
    <location>
        <begin position="1"/>
        <end position="134"/>
    </location>
</feature>
<proteinExistence type="inferred from homology"/>
<accession>B3PXE2</accession>
<reference key="1">
    <citation type="journal article" date="2010" name="Appl. Environ. Microbiol.">
        <title>Conserved symbiotic plasmid DNA sequences in the multireplicon pangenomic structure of Rhizobium etli.</title>
        <authorList>
            <person name="Gonzalez V."/>
            <person name="Acosta J.L."/>
            <person name="Santamaria R.I."/>
            <person name="Bustos P."/>
            <person name="Fernandez J.L."/>
            <person name="Hernandez Gonzalez I.L."/>
            <person name="Diaz R."/>
            <person name="Flores M."/>
            <person name="Palacios R."/>
            <person name="Mora J."/>
            <person name="Davila G."/>
        </authorList>
    </citation>
    <scope>NUCLEOTIDE SEQUENCE [LARGE SCALE GENOMIC DNA]</scope>
    <source>
        <strain>CIAT 652</strain>
    </source>
</reference>
<evidence type="ECO:0000255" key="1">
    <source>
        <dbReference type="HAMAP-Rule" id="MF_00003"/>
    </source>
</evidence>
<comment type="function">
    <text evidence="1">One of several proteins that assist in the late maturation steps of the functional core of the 30S ribosomal subunit. Associates with free 30S ribosomal subunits (but not with 30S subunits that are part of 70S ribosomes or polysomes). Required for efficient processing of 16S rRNA. May interact with the 5'-terminal helix region of 16S rRNA.</text>
</comment>
<comment type="subunit">
    <text evidence="1">Monomer. Binds 30S ribosomal subunits, but not 50S ribosomal subunits or 70S ribosomes.</text>
</comment>
<comment type="subcellular location">
    <subcellularLocation>
        <location evidence="1">Cytoplasm</location>
    </subcellularLocation>
</comment>
<comment type="similarity">
    <text evidence="1">Belongs to the RbfA family.</text>
</comment>
<sequence length="134" mass="15241">MTRPTSSAPSQRMLRVGEQVRAAITQVLQRGEVRDDIIEATVISISEVRMSPDLKIATAYVTPLGVSDHSIVIEALNRHAKFIRGRLGPQLRQMKYMPEVRFRDDTSFDNYKKIDELLRSPEVSRDLDGDNDDQ</sequence>